<dbReference type="EC" id="6.3.5.7" evidence="1"/>
<dbReference type="EMBL" id="BX571965">
    <property type="protein sequence ID" value="CAH34175.1"/>
    <property type="molecule type" value="Genomic_DNA"/>
</dbReference>
<dbReference type="RefSeq" id="WP_004525859.1">
    <property type="nucleotide sequence ID" value="NZ_CP009538.1"/>
</dbReference>
<dbReference type="RefSeq" id="YP_106816.1">
    <property type="nucleotide sequence ID" value="NC_006350.1"/>
</dbReference>
<dbReference type="SMR" id="Q63YJ9"/>
<dbReference type="STRING" id="272560.BPSL0188"/>
<dbReference type="GeneID" id="93058696"/>
<dbReference type="KEGG" id="bps:BPSL0188"/>
<dbReference type="PATRIC" id="fig|272560.51.peg.1531"/>
<dbReference type="eggNOG" id="COG0154">
    <property type="taxonomic scope" value="Bacteria"/>
</dbReference>
<dbReference type="Proteomes" id="UP000000605">
    <property type="component" value="Chromosome 1"/>
</dbReference>
<dbReference type="GO" id="GO:0030956">
    <property type="term" value="C:glutamyl-tRNA(Gln) amidotransferase complex"/>
    <property type="evidence" value="ECO:0007669"/>
    <property type="project" value="InterPro"/>
</dbReference>
<dbReference type="GO" id="GO:0005524">
    <property type="term" value="F:ATP binding"/>
    <property type="evidence" value="ECO:0007669"/>
    <property type="project" value="UniProtKB-KW"/>
</dbReference>
<dbReference type="GO" id="GO:0050567">
    <property type="term" value="F:glutaminyl-tRNA synthase (glutamine-hydrolyzing) activity"/>
    <property type="evidence" value="ECO:0007669"/>
    <property type="project" value="UniProtKB-UniRule"/>
</dbReference>
<dbReference type="GO" id="GO:0006412">
    <property type="term" value="P:translation"/>
    <property type="evidence" value="ECO:0007669"/>
    <property type="project" value="UniProtKB-UniRule"/>
</dbReference>
<dbReference type="Gene3D" id="3.90.1300.10">
    <property type="entry name" value="Amidase signature (AS) domain"/>
    <property type="match status" value="1"/>
</dbReference>
<dbReference type="HAMAP" id="MF_00120">
    <property type="entry name" value="GatA"/>
    <property type="match status" value="1"/>
</dbReference>
<dbReference type="InterPro" id="IPR000120">
    <property type="entry name" value="Amidase"/>
</dbReference>
<dbReference type="InterPro" id="IPR020556">
    <property type="entry name" value="Amidase_CS"/>
</dbReference>
<dbReference type="InterPro" id="IPR023631">
    <property type="entry name" value="Amidase_dom"/>
</dbReference>
<dbReference type="InterPro" id="IPR036928">
    <property type="entry name" value="AS_sf"/>
</dbReference>
<dbReference type="InterPro" id="IPR004412">
    <property type="entry name" value="GatA"/>
</dbReference>
<dbReference type="NCBIfam" id="TIGR00132">
    <property type="entry name" value="gatA"/>
    <property type="match status" value="1"/>
</dbReference>
<dbReference type="PANTHER" id="PTHR11895:SF151">
    <property type="entry name" value="GLUTAMYL-TRNA(GLN) AMIDOTRANSFERASE SUBUNIT A"/>
    <property type="match status" value="1"/>
</dbReference>
<dbReference type="PANTHER" id="PTHR11895">
    <property type="entry name" value="TRANSAMIDASE"/>
    <property type="match status" value="1"/>
</dbReference>
<dbReference type="Pfam" id="PF01425">
    <property type="entry name" value="Amidase"/>
    <property type="match status" value="1"/>
</dbReference>
<dbReference type="SUPFAM" id="SSF75304">
    <property type="entry name" value="Amidase signature (AS) enzymes"/>
    <property type="match status" value="1"/>
</dbReference>
<dbReference type="PROSITE" id="PS00571">
    <property type="entry name" value="AMIDASES"/>
    <property type="match status" value="1"/>
</dbReference>
<reference key="1">
    <citation type="journal article" date="2004" name="Proc. Natl. Acad. Sci. U.S.A.">
        <title>Genomic plasticity of the causative agent of melioidosis, Burkholderia pseudomallei.</title>
        <authorList>
            <person name="Holden M.T.G."/>
            <person name="Titball R.W."/>
            <person name="Peacock S.J."/>
            <person name="Cerdeno-Tarraga A.-M."/>
            <person name="Atkins T."/>
            <person name="Crossman L.C."/>
            <person name="Pitt T."/>
            <person name="Churcher C."/>
            <person name="Mungall K.L."/>
            <person name="Bentley S.D."/>
            <person name="Sebaihia M."/>
            <person name="Thomson N.R."/>
            <person name="Bason N."/>
            <person name="Beacham I.R."/>
            <person name="Brooks K."/>
            <person name="Brown K.A."/>
            <person name="Brown N.F."/>
            <person name="Challis G.L."/>
            <person name="Cherevach I."/>
            <person name="Chillingworth T."/>
            <person name="Cronin A."/>
            <person name="Crossett B."/>
            <person name="Davis P."/>
            <person name="DeShazer D."/>
            <person name="Feltwell T."/>
            <person name="Fraser A."/>
            <person name="Hance Z."/>
            <person name="Hauser H."/>
            <person name="Holroyd S."/>
            <person name="Jagels K."/>
            <person name="Keith K.E."/>
            <person name="Maddison M."/>
            <person name="Moule S."/>
            <person name="Price C."/>
            <person name="Quail M.A."/>
            <person name="Rabbinowitsch E."/>
            <person name="Rutherford K."/>
            <person name="Sanders M."/>
            <person name="Simmonds M."/>
            <person name="Songsivilai S."/>
            <person name="Stevens K."/>
            <person name="Tumapa S."/>
            <person name="Vesaratchavest M."/>
            <person name="Whitehead S."/>
            <person name="Yeats C."/>
            <person name="Barrell B.G."/>
            <person name="Oyston P.C.F."/>
            <person name="Parkhill J."/>
        </authorList>
    </citation>
    <scope>NUCLEOTIDE SEQUENCE [LARGE SCALE GENOMIC DNA]</scope>
    <source>
        <strain>K96243</strain>
    </source>
</reference>
<accession>Q63YJ9</accession>
<protein>
    <recommendedName>
        <fullName evidence="1">Glutamyl-tRNA(Gln) amidotransferase subunit A</fullName>
        <shortName evidence="1">Glu-ADT subunit A</shortName>
        <ecNumber evidence="1">6.3.5.7</ecNumber>
    </recommendedName>
</protein>
<proteinExistence type="inferred from homology"/>
<name>GATA_BURPS</name>
<sequence length="496" mass="52236">MHAKSLTELRAALDAKECSAVELAQHYLKRIDAARDLNAFVHVDAELTLAQAKAADAALANGEAGPLAGLPIAHKDVFVTRGWRSTAGSKMLANYASPFDATVVARLSAAGMVTLGKTNMDEFAMGSSNENSAFGPVKNPWDTSAVPGGSSGGSSAAVAARLAPAATGTDTGGSIRQPASFAGVTGIKPTYGRVSRYGMIAFASSLDQGGPMARSAADCALLLNAMAGFDERDSTSLERADEDYTRHLGKAWAAGGDAGKPLAGLRIGLPAEYFGAGLADDVRAAIDAALKTYEALGATLVPVSLPKTELSIPVYYVIAPAEASSNLSRFDGVRYGHRAAEYRDLLDMYKKSRAEGFGPEVKRRILVGTYVLSHGYYDAYYLQAQKIRRIIAQDFQEAFKSCDVIMGPASPTVAWDIGAKGDDPVQMYLADIYTLSVSLAGLPGMSVPCGFGAGANAKRPVGLQIIGNYFDEARMLQVADAFQRATDWHVQEPAGV</sequence>
<organism>
    <name type="scientific">Burkholderia pseudomallei (strain K96243)</name>
    <dbReference type="NCBI Taxonomy" id="272560"/>
    <lineage>
        <taxon>Bacteria</taxon>
        <taxon>Pseudomonadati</taxon>
        <taxon>Pseudomonadota</taxon>
        <taxon>Betaproteobacteria</taxon>
        <taxon>Burkholderiales</taxon>
        <taxon>Burkholderiaceae</taxon>
        <taxon>Burkholderia</taxon>
        <taxon>pseudomallei group</taxon>
    </lineage>
</organism>
<evidence type="ECO:0000255" key="1">
    <source>
        <dbReference type="HAMAP-Rule" id="MF_00120"/>
    </source>
</evidence>
<comment type="function">
    <text evidence="1">Allows the formation of correctly charged Gln-tRNA(Gln) through the transamidation of misacylated Glu-tRNA(Gln) in organisms which lack glutaminyl-tRNA synthetase. The reaction takes place in the presence of glutamine and ATP through an activated gamma-phospho-Glu-tRNA(Gln).</text>
</comment>
<comment type="catalytic activity">
    <reaction evidence="1">
        <text>L-glutamyl-tRNA(Gln) + L-glutamine + ATP + H2O = L-glutaminyl-tRNA(Gln) + L-glutamate + ADP + phosphate + H(+)</text>
        <dbReference type="Rhea" id="RHEA:17521"/>
        <dbReference type="Rhea" id="RHEA-COMP:9681"/>
        <dbReference type="Rhea" id="RHEA-COMP:9684"/>
        <dbReference type="ChEBI" id="CHEBI:15377"/>
        <dbReference type="ChEBI" id="CHEBI:15378"/>
        <dbReference type="ChEBI" id="CHEBI:29985"/>
        <dbReference type="ChEBI" id="CHEBI:30616"/>
        <dbReference type="ChEBI" id="CHEBI:43474"/>
        <dbReference type="ChEBI" id="CHEBI:58359"/>
        <dbReference type="ChEBI" id="CHEBI:78520"/>
        <dbReference type="ChEBI" id="CHEBI:78521"/>
        <dbReference type="ChEBI" id="CHEBI:456216"/>
        <dbReference type="EC" id="6.3.5.7"/>
    </reaction>
</comment>
<comment type="subunit">
    <text evidence="1">Heterotrimer of A, B and C subunits.</text>
</comment>
<comment type="similarity">
    <text evidence="1">Belongs to the amidase family. GatA subfamily.</text>
</comment>
<keyword id="KW-0067">ATP-binding</keyword>
<keyword id="KW-0436">Ligase</keyword>
<keyword id="KW-0547">Nucleotide-binding</keyword>
<keyword id="KW-0648">Protein biosynthesis</keyword>
<keyword id="KW-1185">Reference proteome</keyword>
<feature type="chain" id="PRO_0000241082" description="Glutamyl-tRNA(Gln) amidotransferase subunit A">
    <location>
        <begin position="1"/>
        <end position="496"/>
    </location>
</feature>
<feature type="active site" description="Charge relay system" evidence="1">
    <location>
        <position position="75"/>
    </location>
</feature>
<feature type="active site" description="Charge relay system" evidence="1">
    <location>
        <position position="150"/>
    </location>
</feature>
<feature type="active site" description="Acyl-ester intermediate" evidence="1">
    <location>
        <position position="174"/>
    </location>
</feature>
<gene>
    <name evidence="1" type="primary">gatA</name>
    <name type="ordered locus">BPSL0188</name>
</gene>